<evidence type="ECO:0000250" key="1">
    <source>
        <dbReference type="UniProtKB" id="Q96FH0"/>
    </source>
</evidence>
<evidence type="ECO:0000256" key="2">
    <source>
        <dbReference type="SAM" id="MobiDB-lite"/>
    </source>
</evidence>
<evidence type="ECO:0000305" key="3"/>
<evidence type="ECO:0000312" key="4">
    <source>
        <dbReference type="EMBL" id="CAG04861.1"/>
    </source>
</evidence>
<comment type="function">
    <text evidence="1">As part of a BORC-like complex, it may play a role in the movement and localization of lysosomes at the cell periphery. Associated with the cytosolic face of lysosomes, this complex may couple lysosomes to microtubule plus-end-directed kinesin motors, driving lysosome movement toward the cell periphery.</text>
</comment>
<comment type="subcellular location">
    <subcellularLocation>
        <location evidence="1">Lysosome membrane</location>
    </subcellularLocation>
</comment>
<comment type="similarity">
    <text evidence="3">Belongs to the BORCS8 family.</text>
</comment>
<dbReference type="EMBL" id="CAAE01014751">
    <property type="protein sequence ID" value="CAG04861.1"/>
    <property type="molecule type" value="Genomic_DNA"/>
</dbReference>
<dbReference type="SMR" id="Q4S3C1"/>
<dbReference type="FunCoup" id="Q4S3C1">
    <property type="interactions" value="751"/>
</dbReference>
<dbReference type="STRING" id="99883.ENSTNIP00000016178"/>
<dbReference type="Ensembl" id="ENSTNIT00000016389.1">
    <property type="protein sequence ID" value="ENSTNIP00000016178.1"/>
    <property type="gene ID" value="ENSTNIG00000013195.1"/>
</dbReference>
<dbReference type="KEGG" id="tng:GSTEN00024711G001"/>
<dbReference type="GeneTree" id="ENSGT00390000014856"/>
<dbReference type="HOGENOM" id="CLU_151479_0_0_1"/>
<dbReference type="InParanoid" id="Q4S3C1"/>
<dbReference type="OMA" id="SMMNHAR"/>
<dbReference type="OrthoDB" id="10044187at2759"/>
<dbReference type="TreeFam" id="TF313931"/>
<dbReference type="Proteomes" id="UP000007303">
    <property type="component" value="Unassembled WGS sequence"/>
</dbReference>
<dbReference type="GO" id="GO:0099078">
    <property type="term" value="C:BORC complex"/>
    <property type="evidence" value="ECO:0000250"/>
    <property type="project" value="UniProtKB"/>
</dbReference>
<dbReference type="GO" id="GO:0005765">
    <property type="term" value="C:lysosomal membrane"/>
    <property type="evidence" value="ECO:0007669"/>
    <property type="project" value="UniProtKB-SubCell"/>
</dbReference>
<dbReference type="InterPro" id="IPR019320">
    <property type="entry name" value="BORCS8"/>
</dbReference>
<dbReference type="PANTHER" id="PTHR21146:SF0">
    <property type="entry name" value="BLOC-1-RELATED COMPLEX SUBUNIT 8"/>
    <property type="match status" value="1"/>
</dbReference>
<dbReference type="PANTHER" id="PTHR21146">
    <property type="entry name" value="MEF2B PROTEIN"/>
    <property type="match status" value="1"/>
</dbReference>
<dbReference type="Pfam" id="PF10167">
    <property type="entry name" value="BORCS8"/>
    <property type="match status" value="1"/>
</dbReference>
<sequence>MEDQEMHLKVRRVADKFTESMYFLANEPSVALYRLQEHVRRSLPELVQHKTDMQSWEEQSQGAIYTVEYACSAVKSMTNSSIYFKNIDSLLRQTISMKEQISNSQGRSPHVSAPSASS</sequence>
<organism>
    <name type="scientific">Tetraodon nigroviridis</name>
    <name type="common">Spotted green pufferfish</name>
    <name type="synonym">Chelonodon nigroviridis</name>
    <dbReference type="NCBI Taxonomy" id="99883"/>
    <lineage>
        <taxon>Eukaryota</taxon>
        <taxon>Metazoa</taxon>
        <taxon>Chordata</taxon>
        <taxon>Craniata</taxon>
        <taxon>Vertebrata</taxon>
        <taxon>Euteleostomi</taxon>
        <taxon>Actinopterygii</taxon>
        <taxon>Neopterygii</taxon>
        <taxon>Teleostei</taxon>
        <taxon>Neoteleostei</taxon>
        <taxon>Acanthomorphata</taxon>
        <taxon>Eupercaria</taxon>
        <taxon>Tetraodontiformes</taxon>
        <taxon>Tetradontoidea</taxon>
        <taxon>Tetraodontidae</taxon>
        <taxon>Tetraodon</taxon>
    </lineage>
</organism>
<proteinExistence type="inferred from homology"/>
<gene>
    <name evidence="1" type="primary">borcs8</name>
    <name evidence="4" type="ORF">GSTENG00024711001</name>
</gene>
<protein>
    <recommendedName>
        <fullName evidence="3">BLOC-1-related complex subunit 8</fullName>
    </recommendedName>
</protein>
<keyword id="KW-0458">Lysosome</keyword>
<keyword id="KW-0472">Membrane</keyword>
<keyword id="KW-1185">Reference proteome</keyword>
<feature type="chain" id="PRO_0000269845" description="BLOC-1-related complex subunit 8">
    <location>
        <begin position="1"/>
        <end position="118"/>
    </location>
</feature>
<feature type="region of interest" description="Disordered" evidence="2">
    <location>
        <begin position="98"/>
        <end position="118"/>
    </location>
</feature>
<feature type="compositionally biased region" description="Polar residues" evidence="2">
    <location>
        <begin position="98"/>
        <end position="107"/>
    </location>
</feature>
<accession>Q4S3C1</accession>
<reference key="1">
    <citation type="journal article" date="2004" name="Nature">
        <title>Genome duplication in the teleost fish Tetraodon nigroviridis reveals the early vertebrate proto-karyotype.</title>
        <authorList>
            <person name="Jaillon O."/>
            <person name="Aury J.-M."/>
            <person name="Brunet F."/>
            <person name="Petit J.-L."/>
            <person name="Stange-Thomann N."/>
            <person name="Mauceli E."/>
            <person name="Bouneau L."/>
            <person name="Fischer C."/>
            <person name="Ozouf-Costaz C."/>
            <person name="Bernot A."/>
            <person name="Nicaud S."/>
            <person name="Jaffe D."/>
            <person name="Fisher S."/>
            <person name="Lutfalla G."/>
            <person name="Dossat C."/>
            <person name="Segurens B."/>
            <person name="Dasilva C."/>
            <person name="Salanoubat M."/>
            <person name="Levy M."/>
            <person name="Boudet N."/>
            <person name="Castellano S."/>
            <person name="Anthouard V."/>
            <person name="Jubin C."/>
            <person name="Castelli V."/>
            <person name="Katinka M."/>
            <person name="Vacherie B."/>
            <person name="Biemont C."/>
            <person name="Skalli Z."/>
            <person name="Cattolico L."/>
            <person name="Poulain J."/>
            <person name="De Berardinis V."/>
            <person name="Cruaud C."/>
            <person name="Duprat S."/>
            <person name="Brottier P."/>
            <person name="Coutanceau J.-P."/>
            <person name="Gouzy J."/>
            <person name="Parra G."/>
            <person name="Lardier G."/>
            <person name="Chapple C."/>
            <person name="McKernan K.J."/>
            <person name="McEwan P."/>
            <person name="Bosak S."/>
            <person name="Kellis M."/>
            <person name="Volff J.-N."/>
            <person name="Guigo R."/>
            <person name="Zody M.C."/>
            <person name="Mesirov J."/>
            <person name="Lindblad-Toh K."/>
            <person name="Birren B."/>
            <person name="Nusbaum C."/>
            <person name="Kahn D."/>
            <person name="Robinson-Rechavi M."/>
            <person name="Laudet V."/>
            <person name="Schachter V."/>
            <person name="Quetier F."/>
            <person name="Saurin W."/>
            <person name="Scarpelli C."/>
            <person name="Wincker P."/>
            <person name="Lander E.S."/>
            <person name="Weissenbach J."/>
            <person name="Roest Crollius H."/>
        </authorList>
    </citation>
    <scope>NUCLEOTIDE SEQUENCE [LARGE SCALE GENOMIC DNA]</scope>
</reference>
<name>BORC8_TETNG</name>